<keyword id="KW-0963">Cytoplasm</keyword>
<keyword id="KW-0448">Lipopolysaccharide biosynthesis</keyword>
<keyword id="KW-0808">Transferase</keyword>
<proteinExistence type="inferred from homology"/>
<sequence length="276" mass="29463">MIPNPRVEIGQAVFANDAPLALIAGPCQLESREHAFEMAGRLKEMAEKLGLGFVYKTSFDKANRTSLLGKRGAGLDAALPIFADLRRELGVPVLTDVHTEGQCEILADAVDVLQIPAFLCRQTDLLVAAAKTGKVVNVKKGQFLAPWDMKNVVAKITASGNPNVLTTERGVSFGYNTLVTDMRALPIMAEIGAPVIFDATHSVQQPGGQGSSSGGDRRFVETLARAAVAVGVAGVFIETHQDPDNAPSDGPNMVQLDKMPALLERLMAFDRIAKSK</sequence>
<comment type="catalytic activity">
    <reaction evidence="1">
        <text>D-arabinose 5-phosphate + phosphoenolpyruvate + H2O = 3-deoxy-alpha-D-manno-2-octulosonate-8-phosphate + phosphate</text>
        <dbReference type="Rhea" id="RHEA:14053"/>
        <dbReference type="ChEBI" id="CHEBI:15377"/>
        <dbReference type="ChEBI" id="CHEBI:43474"/>
        <dbReference type="ChEBI" id="CHEBI:57693"/>
        <dbReference type="ChEBI" id="CHEBI:58702"/>
        <dbReference type="ChEBI" id="CHEBI:85985"/>
        <dbReference type="EC" id="2.5.1.55"/>
    </reaction>
</comment>
<comment type="pathway">
    <text evidence="1">Carbohydrate biosynthesis; 3-deoxy-D-manno-octulosonate biosynthesis; 3-deoxy-D-manno-octulosonate from D-ribulose 5-phosphate: step 2/3.</text>
</comment>
<comment type="pathway">
    <text evidence="1">Bacterial outer membrane biogenesis; lipopolysaccharide biosynthesis.</text>
</comment>
<comment type="subcellular location">
    <subcellularLocation>
        <location evidence="1">Cytoplasm</location>
    </subcellularLocation>
</comment>
<comment type="similarity">
    <text evidence="1">Belongs to the KdsA family.</text>
</comment>
<organism>
    <name type="scientific">Chelativorans sp. (strain BNC1)</name>
    <dbReference type="NCBI Taxonomy" id="266779"/>
    <lineage>
        <taxon>Bacteria</taxon>
        <taxon>Pseudomonadati</taxon>
        <taxon>Pseudomonadota</taxon>
        <taxon>Alphaproteobacteria</taxon>
        <taxon>Hyphomicrobiales</taxon>
        <taxon>Phyllobacteriaceae</taxon>
        <taxon>Chelativorans</taxon>
    </lineage>
</organism>
<feature type="chain" id="PRO_1000003341" description="2-dehydro-3-deoxyphosphooctonate aldolase">
    <location>
        <begin position="1"/>
        <end position="276"/>
    </location>
</feature>
<protein>
    <recommendedName>
        <fullName evidence="1">2-dehydro-3-deoxyphosphooctonate aldolase</fullName>
        <ecNumber evidence="1">2.5.1.55</ecNumber>
    </recommendedName>
    <alternativeName>
        <fullName evidence="1">3-deoxy-D-manno-octulosonic acid 8-phosphate synthase</fullName>
    </alternativeName>
    <alternativeName>
        <fullName evidence="1">KDO-8-phosphate synthase</fullName>
        <shortName evidence="1">KDO 8-P synthase</shortName>
        <shortName evidence="1">KDOPS</shortName>
    </alternativeName>
    <alternativeName>
        <fullName evidence="1">Phospho-2-dehydro-3-deoxyoctonate aldolase</fullName>
    </alternativeName>
</protein>
<reference key="1">
    <citation type="submission" date="2006-06" db="EMBL/GenBank/DDBJ databases">
        <title>Complete sequence of chromosome of Mesorhizobium sp. BNC1.</title>
        <authorList>
            <consortium name="US DOE Joint Genome Institute"/>
            <person name="Copeland A."/>
            <person name="Lucas S."/>
            <person name="Lapidus A."/>
            <person name="Barry K."/>
            <person name="Detter J.C."/>
            <person name="Glavina del Rio T."/>
            <person name="Hammon N."/>
            <person name="Israni S."/>
            <person name="Dalin E."/>
            <person name="Tice H."/>
            <person name="Pitluck S."/>
            <person name="Chertkov O."/>
            <person name="Brettin T."/>
            <person name="Bruce D."/>
            <person name="Han C."/>
            <person name="Tapia R."/>
            <person name="Gilna P."/>
            <person name="Schmutz J."/>
            <person name="Larimer F."/>
            <person name="Land M."/>
            <person name="Hauser L."/>
            <person name="Kyrpides N."/>
            <person name="Mikhailova N."/>
            <person name="Richardson P."/>
        </authorList>
    </citation>
    <scope>NUCLEOTIDE SEQUENCE [LARGE SCALE GENOMIC DNA]</scope>
    <source>
        <strain>BNC1</strain>
    </source>
</reference>
<dbReference type="EC" id="2.5.1.55" evidence="1"/>
<dbReference type="EMBL" id="CP000390">
    <property type="protein sequence ID" value="ABG63028.1"/>
    <property type="molecule type" value="Genomic_DNA"/>
</dbReference>
<dbReference type="SMR" id="Q11HU7"/>
<dbReference type="STRING" id="266779.Meso_1633"/>
<dbReference type="KEGG" id="mes:Meso_1633"/>
<dbReference type="eggNOG" id="COG2877">
    <property type="taxonomic scope" value="Bacteria"/>
</dbReference>
<dbReference type="HOGENOM" id="CLU_036666_0_0_5"/>
<dbReference type="OrthoDB" id="9776934at2"/>
<dbReference type="UniPathway" id="UPA00030"/>
<dbReference type="UniPathway" id="UPA00357">
    <property type="reaction ID" value="UER00474"/>
</dbReference>
<dbReference type="GO" id="GO:0005737">
    <property type="term" value="C:cytoplasm"/>
    <property type="evidence" value="ECO:0007669"/>
    <property type="project" value="UniProtKB-SubCell"/>
</dbReference>
<dbReference type="GO" id="GO:0008676">
    <property type="term" value="F:3-deoxy-8-phosphooctulonate synthase activity"/>
    <property type="evidence" value="ECO:0007669"/>
    <property type="project" value="UniProtKB-UniRule"/>
</dbReference>
<dbReference type="GO" id="GO:0019294">
    <property type="term" value="P:keto-3-deoxy-D-manno-octulosonic acid biosynthetic process"/>
    <property type="evidence" value="ECO:0007669"/>
    <property type="project" value="UniProtKB-UniRule"/>
</dbReference>
<dbReference type="Gene3D" id="3.20.20.70">
    <property type="entry name" value="Aldolase class I"/>
    <property type="match status" value="1"/>
</dbReference>
<dbReference type="HAMAP" id="MF_00056">
    <property type="entry name" value="KDO8P_synth"/>
    <property type="match status" value="1"/>
</dbReference>
<dbReference type="InterPro" id="IPR013785">
    <property type="entry name" value="Aldolase_TIM"/>
</dbReference>
<dbReference type="InterPro" id="IPR006218">
    <property type="entry name" value="DAHP1/KDSA"/>
</dbReference>
<dbReference type="InterPro" id="IPR006269">
    <property type="entry name" value="KDO8P_synthase"/>
</dbReference>
<dbReference type="NCBIfam" id="TIGR01362">
    <property type="entry name" value="KDO8P_synth"/>
    <property type="match status" value="1"/>
</dbReference>
<dbReference type="NCBIfam" id="NF003543">
    <property type="entry name" value="PRK05198.1"/>
    <property type="match status" value="1"/>
</dbReference>
<dbReference type="PANTHER" id="PTHR21057">
    <property type="entry name" value="PHOSPHO-2-DEHYDRO-3-DEOXYHEPTONATE ALDOLASE"/>
    <property type="match status" value="1"/>
</dbReference>
<dbReference type="Pfam" id="PF00793">
    <property type="entry name" value="DAHP_synth_1"/>
    <property type="match status" value="1"/>
</dbReference>
<dbReference type="SUPFAM" id="SSF51569">
    <property type="entry name" value="Aldolase"/>
    <property type="match status" value="1"/>
</dbReference>
<accession>Q11HU7</accession>
<name>KDSA_CHESB</name>
<evidence type="ECO:0000255" key="1">
    <source>
        <dbReference type="HAMAP-Rule" id="MF_00056"/>
    </source>
</evidence>
<gene>
    <name evidence="1" type="primary">kdsA</name>
    <name type="ordered locus">Meso_1633</name>
</gene>